<proteinExistence type="inferred from homology"/>
<reference key="1">
    <citation type="submission" date="2007-03" db="EMBL/GenBank/DDBJ databases">
        <title>Complete sequence of chromosome 1 of Burkholderia vietnamiensis G4.</title>
        <authorList>
            <consortium name="US DOE Joint Genome Institute"/>
            <person name="Copeland A."/>
            <person name="Lucas S."/>
            <person name="Lapidus A."/>
            <person name="Barry K."/>
            <person name="Detter J.C."/>
            <person name="Glavina del Rio T."/>
            <person name="Hammon N."/>
            <person name="Israni S."/>
            <person name="Dalin E."/>
            <person name="Tice H."/>
            <person name="Pitluck S."/>
            <person name="Chain P."/>
            <person name="Malfatti S."/>
            <person name="Shin M."/>
            <person name="Vergez L."/>
            <person name="Schmutz J."/>
            <person name="Larimer F."/>
            <person name="Land M."/>
            <person name="Hauser L."/>
            <person name="Kyrpides N."/>
            <person name="Tiedje J."/>
            <person name="Richardson P."/>
        </authorList>
    </citation>
    <scope>NUCLEOTIDE SEQUENCE [LARGE SCALE GENOMIC DNA]</scope>
    <source>
        <strain>G4 / LMG 22486</strain>
    </source>
</reference>
<feature type="chain" id="PRO_0000390001" description="NADH-quinone oxidoreductase subunit K">
    <location>
        <begin position="1"/>
        <end position="101"/>
    </location>
</feature>
<feature type="transmembrane region" description="Helical" evidence="1">
    <location>
        <begin position="4"/>
        <end position="24"/>
    </location>
</feature>
<feature type="transmembrane region" description="Helical" evidence="1">
    <location>
        <begin position="29"/>
        <end position="49"/>
    </location>
</feature>
<feature type="transmembrane region" description="Helical" evidence="1">
    <location>
        <begin position="61"/>
        <end position="81"/>
    </location>
</feature>
<dbReference type="EC" id="7.1.1.-" evidence="1"/>
<dbReference type="EMBL" id="CP000614">
    <property type="protein sequence ID" value="ABO55323.1"/>
    <property type="molecule type" value="Genomic_DNA"/>
</dbReference>
<dbReference type="SMR" id="A4JGC0"/>
<dbReference type="KEGG" id="bvi:Bcep1808_2324"/>
<dbReference type="eggNOG" id="COG0713">
    <property type="taxonomic scope" value="Bacteria"/>
</dbReference>
<dbReference type="HOGENOM" id="CLU_144724_2_0_4"/>
<dbReference type="Proteomes" id="UP000002287">
    <property type="component" value="Chromosome 1"/>
</dbReference>
<dbReference type="GO" id="GO:0030964">
    <property type="term" value="C:NADH dehydrogenase complex"/>
    <property type="evidence" value="ECO:0007669"/>
    <property type="project" value="TreeGrafter"/>
</dbReference>
<dbReference type="GO" id="GO:0005886">
    <property type="term" value="C:plasma membrane"/>
    <property type="evidence" value="ECO:0007669"/>
    <property type="project" value="UniProtKB-SubCell"/>
</dbReference>
<dbReference type="GO" id="GO:0050136">
    <property type="term" value="F:NADH:ubiquinone reductase (non-electrogenic) activity"/>
    <property type="evidence" value="ECO:0007669"/>
    <property type="project" value="UniProtKB-UniRule"/>
</dbReference>
<dbReference type="GO" id="GO:0048038">
    <property type="term" value="F:quinone binding"/>
    <property type="evidence" value="ECO:0007669"/>
    <property type="project" value="UniProtKB-KW"/>
</dbReference>
<dbReference type="GO" id="GO:0042773">
    <property type="term" value="P:ATP synthesis coupled electron transport"/>
    <property type="evidence" value="ECO:0007669"/>
    <property type="project" value="InterPro"/>
</dbReference>
<dbReference type="FunFam" id="1.10.287.3510:FF:000001">
    <property type="entry name" value="NADH-quinone oxidoreductase subunit K"/>
    <property type="match status" value="1"/>
</dbReference>
<dbReference type="Gene3D" id="1.10.287.3510">
    <property type="match status" value="1"/>
</dbReference>
<dbReference type="HAMAP" id="MF_01456">
    <property type="entry name" value="NDH1_NuoK"/>
    <property type="match status" value="1"/>
</dbReference>
<dbReference type="InterPro" id="IPR001133">
    <property type="entry name" value="NADH_UbQ_OxRdtase_chain4L/K"/>
</dbReference>
<dbReference type="InterPro" id="IPR039428">
    <property type="entry name" value="NUOK/Mnh_C1-like"/>
</dbReference>
<dbReference type="NCBIfam" id="NF004320">
    <property type="entry name" value="PRK05715.1-2"/>
    <property type="match status" value="1"/>
</dbReference>
<dbReference type="NCBIfam" id="NF004321">
    <property type="entry name" value="PRK05715.1-3"/>
    <property type="match status" value="1"/>
</dbReference>
<dbReference type="NCBIfam" id="NF004323">
    <property type="entry name" value="PRK05715.1-5"/>
    <property type="match status" value="1"/>
</dbReference>
<dbReference type="PANTHER" id="PTHR11434:SF21">
    <property type="entry name" value="NADH DEHYDROGENASE SUBUNIT 4L-RELATED"/>
    <property type="match status" value="1"/>
</dbReference>
<dbReference type="PANTHER" id="PTHR11434">
    <property type="entry name" value="NADH-UBIQUINONE OXIDOREDUCTASE SUBUNIT ND4L"/>
    <property type="match status" value="1"/>
</dbReference>
<dbReference type="Pfam" id="PF00420">
    <property type="entry name" value="Oxidored_q2"/>
    <property type="match status" value="1"/>
</dbReference>
<protein>
    <recommendedName>
        <fullName evidence="1">NADH-quinone oxidoreductase subunit K</fullName>
        <ecNumber evidence="1">7.1.1.-</ecNumber>
    </recommendedName>
    <alternativeName>
        <fullName evidence="1">NADH dehydrogenase I subunit K</fullName>
    </alternativeName>
    <alternativeName>
        <fullName evidence="1">NDH-1 subunit K</fullName>
    </alternativeName>
</protein>
<gene>
    <name evidence="1" type="primary">nuoK</name>
    <name type="ordered locus">Bcep1808_2324</name>
</gene>
<organism>
    <name type="scientific">Burkholderia vietnamiensis (strain G4 / LMG 22486)</name>
    <name type="common">Burkholderia cepacia (strain R1808)</name>
    <dbReference type="NCBI Taxonomy" id="269482"/>
    <lineage>
        <taxon>Bacteria</taxon>
        <taxon>Pseudomonadati</taxon>
        <taxon>Pseudomonadota</taxon>
        <taxon>Betaproteobacteria</taxon>
        <taxon>Burkholderiales</taxon>
        <taxon>Burkholderiaceae</taxon>
        <taxon>Burkholderia</taxon>
        <taxon>Burkholderia cepacia complex</taxon>
    </lineage>
</organism>
<accession>A4JGC0</accession>
<comment type="function">
    <text evidence="1">NDH-1 shuttles electrons from NADH, via FMN and iron-sulfur (Fe-S) centers, to quinones in the respiratory chain. The immediate electron acceptor for the enzyme in this species is believed to be ubiquinone. Couples the redox reaction to proton translocation (for every two electrons transferred, four hydrogen ions are translocated across the cytoplasmic membrane), and thus conserves the redox energy in a proton gradient.</text>
</comment>
<comment type="catalytic activity">
    <reaction evidence="1">
        <text>a quinone + NADH + 5 H(+)(in) = a quinol + NAD(+) + 4 H(+)(out)</text>
        <dbReference type="Rhea" id="RHEA:57888"/>
        <dbReference type="ChEBI" id="CHEBI:15378"/>
        <dbReference type="ChEBI" id="CHEBI:24646"/>
        <dbReference type="ChEBI" id="CHEBI:57540"/>
        <dbReference type="ChEBI" id="CHEBI:57945"/>
        <dbReference type="ChEBI" id="CHEBI:132124"/>
    </reaction>
</comment>
<comment type="subunit">
    <text evidence="1">NDH-1 is composed of 14 different subunits. Subunits NuoA, H, J, K, L, M, N constitute the membrane sector of the complex.</text>
</comment>
<comment type="subcellular location">
    <subcellularLocation>
        <location evidence="1">Cell inner membrane</location>
        <topology evidence="1">Multi-pass membrane protein</topology>
    </subcellularLocation>
</comment>
<comment type="similarity">
    <text evidence="1">Belongs to the complex I subunit 4L family.</text>
</comment>
<evidence type="ECO:0000255" key="1">
    <source>
        <dbReference type="HAMAP-Rule" id="MF_01456"/>
    </source>
</evidence>
<sequence>MLTLAHYLVLGAILFAMSIVGIFLNRRNIIIILMAIELMLLAVNTNFVAFSHYLGDVHGQIFVFFVLTVAAAEAAIGLAILVTLFRKLDTINVEDLDQLKG</sequence>
<name>NUOK_BURVG</name>
<keyword id="KW-0997">Cell inner membrane</keyword>
<keyword id="KW-1003">Cell membrane</keyword>
<keyword id="KW-0472">Membrane</keyword>
<keyword id="KW-0520">NAD</keyword>
<keyword id="KW-0874">Quinone</keyword>
<keyword id="KW-1278">Translocase</keyword>
<keyword id="KW-0812">Transmembrane</keyword>
<keyword id="KW-1133">Transmembrane helix</keyword>
<keyword id="KW-0813">Transport</keyword>
<keyword id="KW-0830">Ubiquinone</keyword>